<accession>B8FGS3</accession>
<organism>
    <name type="scientific">Desulfatibacillum aliphaticivorans</name>
    <dbReference type="NCBI Taxonomy" id="218208"/>
    <lineage>
        <taxon>Bacteria</taxon>
        <taxon>Pseudomonadati</taxon>
        <taxon>Thermodesulfobacteriota</taxon>
        <taxon>Desulfobacteria</taxon>
        <taxon>Desulfobacterales</taxon>
        <taxon>Desulfatibacillaceae</taxon>
        <taxon>Desulfatibacillum</taxon>
    </lineage>
</organism>
<evidence type="ECO:0000255" key="1">
    <source>
        <dbReference type="HAMAP-Rule" id="MF_00332"/>
    </source>
</evidence>
<evidence type="ECO:0000256" key="2">
    <source>
        <dbReference type="SAM" id="MobiDB-lite"/>
    </source>
</evidence>
<comment type="function">
    <text evidence="1">Acts as a chaperone.</text>
</comment>
<comment type="induction">
    <text evidence="1">By stress conditions e.g. heat shock.</text>
</comment>
<comment type="similarity">
    <text evidence="1">Belongs to the heat shock protein 70 family.</text>
</comment>
<keyword id="KW-0067">ATP-binding</keyword>
<keyword id="KW-0143">Chaperone</keyword>
<keyword id="KW-0547">Nucleotide-binding</keyword>
<keyword id="KW-0597">Phosphoprotein</keyword>
<keyword id="KW-1185">Reference proteome</keyword>
<keyword id="KW-0346">Stress response</keyword>
<protein>
    <recommendedName>
        <fullName evidence="1">Chaperone protein DnaK</fullName>
    </recommendedName>
    <alternativeName>
        <fullName evidence="1">HSP70</fullName>
    </alternativeName>
    <alternativeName>
        <fullName evidence="1">Heat shock 70 kDa protein</fullName>
    </alternativeName>
    <alternativeName>
        <fullName evidence="1">Heat shock protein 70</fullName>
    </alternativeName>
</protein>
<sequence>MGKVIGIDLGTTNSCVAVMEGKEPKVLTNPDGGRTTPSIVGISSSGERLVGQIAKRQAITNPQNTVFAVKRLIGRKFASQQVKDDMNVLPYQIVDGDNGDAYIELQGKKYSPQEISSFILAYIKKAAEEYLGETVTDAVITVPAYFNDSQRQATKDAGKIAGLNVLRIINEPTAASLAYGLDKKSDEKIAVFDLGGGTFDVSILEIGEGVFEVKSTNGDTHLGGEDFDLLVIDYLADEFKKDQGIDLRSDKMALQRLKEAAEKAKMELSTSVETEVNLPFITADASGPKHLNVKLTRAKLESLVSDLLDKLEGPCVTALKDAGMSASEVDEVILVGGMTRMPAVQERVKKIFGKEPHKGVNPDEVVAIGAGIQGGVLMGDVKDVLLLDVTPLSLGIETLGGVMTKLIEKNTTIPTKKSQVFSTAADNQPAVSIHVLQGEREMATGNKTLGRFELVGIPPAPRGVPQIEVTFDIDANGIVSVSAKDQGTGKEQSIKITASSGLTEEEIEQMVKDAELHAEEDKKKKELADARNNADALVYATEKSLKDLGDKIDASTKENVEAAVEKLKKALEGEDVEEIKRLSEELTTASHKLAEAMYQQASAEGQAGAAGDPGAGQGAAGGAAPDDDVVDADFEEVKD</sequence>
<proteinExistence type="inferred from homology"/>
<gene>
    <name evidence="1" type="primary">dnaK</name>
    <name type="ordered locus">Dalk_3615</name>
</gene>
<name>DNAK_DESAL</name>
<feature type="chain" id="PRO_1000119697" description="Chaperone protein DnaK">
    <location>
        <begin position="1"/>
        <end position="639"/>
    </location>
</feature>
<feature type="region of interest" description="Disordered" evidence="2">
    <location>
        <begin position="599"/>
        <end position="639"/>
    </location>
</feature>
<feature type="compositionally biased region" description="Low complexity" evidence="2">
    <location>
        <begin position="599"/>
        <end position="610"/>
    </location>
</feature>
<feature type="compositionally biased region" description="Gly residues" evidence="2">
    <location>
        <begin position="611"/>
        <end position="621"/>
    </location>
</feature>
<feature type="compositionally biased region" description="Acidic residues" evidence="2">
    <location>
        <begin position="625"/>
        <end position="639"/>
    </location>
</feature>
<feature type="modified residue" description="Phosphothreonine; by autocatalysis" evidence="1">
    <location>
        <position position="198"/>
    </location>
</feature>
<dbReference type="EMBL" id="CP001322">
    <property type="protein sequence ID" value="ACL05303.1"/>
    <property type="molecule type" value="Genomic_DNA"/>
</dbReference>
<dbReference type="RefSeq" id="WP_015948360.1">
    <property type="nucleotide sequence ID" value="NC_011768.1"/>
</dbReference>
<dbReference type="SMR" id="B8FGS3"/>
<dbReference type="KEGG" id="dal:Dalk_3615"/>
<dbReference type="eggNOG" id="COG0443">
    <property type="taxonomic scope" value="Bacteria"/>
</dbReference>
<dbReference type="HOGENOM" id="CLU_005965_2_3_7"/>
<dbReference type="Proteomes" id="UP000000739">
    <property type="component" value="Chromosome"/>
</dbReference>
<dbReference type="GO" id="GO:0005524">
    <property type="term" value="F:ATP binding"/>
    <property type="evidence" value="ECO:0007669"/>
    <property type="project" value="UniProtKB-UniRule"/>
</dbReference>
<dbReference type="GO" id="GO:0140662">
    <property type="term" value="F:ATP-dependent protein folding chaperone"/>
    <property type="evidence" value="ECO:0007669"/>
    <property type="project" value="InterPro"/>
</dbReference>
<dbReference type="GO" id="GO:0051082">
    <property type="term" value="F:unfolded protein binding"/>
    <property type="evidence" value="ECO:0007669"/>
    <property type="project" value="InterPro"/>
</dbReference>
<dbReference type="CDD" id="cd10234">
    <property type="entry name" value="ASKHA_NBD_HSP70_DnaK-like"/>
    <property type="match status" value="1"/>
</dbReference>
<dbReference type="FunFam" id="2.60.34.10:FF:000014">
    <property type="entry name" value="Chaperone protein DnaK HSP70"/>
    <property type="match status" value="1"/>
</dbReference>
<dbReference type="FunFam" id="3.30.420.40:FF:000020">
    <property type="entry name" value="Chaperone protein HscA homolog"/>
    <property type="match status" value="1"/>
</dbReference>
<dbReference type="FunFam" id="3.30.30.30:FF:000003">
    <property type="entry name" value="Heat shock protein 9"/>
    <property type="match status" value="1"/>
</dbReference>
<dbReference type="FunFam" id="1.20.1270.10:FF:000001">
    <property type="entry name" value="Molecular chaperone DnaK"/>
    <property type="match status" value="1"/>
</dbReference>
<dbReference type="FunFam" id="3.30.420.40:FF:000004">
    <property type="entry name" value="Molecular chaperone DnaK"/>
    <property type="match status" value="1"/>
</dbReference>
<dbReference type="FunFam" id="3.90.640.10:FF:000003">
    <property type="entry name" value="Molecular chaperone DnaK"/>
    <property type="match status" value="1"/>
</dbReference>
<dbReference type="Gene3D" id="1.20.1270.10">
    <property type="match status" value="1"/>
</dbReference>
<dbReference type="Gene3D" id="3.30.420.40">
    <property type="match status" value="2"/>
</dbReference>
<dbReference type="Gene3D" id="3.90.640.10">
    <property type="entry name" value="Actin, Chain A, domain 4"/>
    <property type="match status" value="1"/>
</dbReference>
<dbReference type="Gene3D" id="2.60.34.10">
    <property type="entry name" value="Substrate Binding Domain Of DNAk, Chain A, domain 1"/>
    <property type="match status" value="1"/>
</dbReference>
<dbReference type="HAMAP" id="MF_00332">
    <property type="entry name" value="DnaK"/>
    <property type="match status" value="1"/>
</dbReference>
<dbReference type="InterPro" id="IPR043129">
    <property type="entry name" value="ATPase_NBD"/>
</dbReference>
<dbReference type="InterPro" id="IPR012725">
    <property type="entry name" value="Chaperone_DnaK"/>
</dbReference>
<dbReference type="InterPro" id="IPR018181">
    <property type="entry name" value="Heat_shock_70_CS"/>
</dbReference>
<dbReference type="InterPro" id="IPR029048">
    <property type="entry name" value="HSP70_C_sf"/>
</dbReference>
<dbReference type="InterPro" id="IPR029047">
    <property type="entry name" value="HSP70_peptide-bd_sf"/>
</dbReference>
<dbReference type="InterPro" id="IPR013126">
    <property type="entry name" value="Hsp_70_fam"/>
</dbReference>
<dbReference type="NCBIfam" id="NF001413">
    <property type="entry name" value="PRK00290.1"/>
    <property type="match status" value="1"/>
</dbReference>
<dbReference type="NCBIfam" id="NF003520">
    <property type="entry name" value="PRK05183.1"/>
    <property type="match status" value="1"/>
</dbReference>
<dbReference type="NCBIfam" id="TIGR02350">
    <property type="entry name" value="prok_dnaK"/>
    <property type="match status" value="1"/>
</dbReference>
<dbReference type="PANTHER" id="PTHR19375">
    <property type="entry name" value="HEAT SHOCK PROTEIN 70KDA"/>
    <property type="match status" value="1"/>
</dbReference>
<dbReference type="Pfam" id="PF00012">
    <property type="entry name" value="HSP70"/>
    <property type="match status" value="1"/>
</dbReference>
<dbReference type="PRINTS" id="PR00301">
    <property type="entry name" value="HEATSHOCK70"/>
</dbReference>
<dbReference type="SUPFAM" id="SSF53067">
    <property type="entry name" value="Actin-like ATPase domain"/>
    <property type="match status" value="2"/>
</dbReference>
<dbReference type="SUPFAM" id="SSF100934">
    <property type="entry name" value="Heat shock protein 70kD (HSP70), C-terminal subdomain"/>
    <property type="match status" value="1"/>
</dbReference>
<dbReference type="SUPFAM" id="SSF100920">
    <property type="entry name" value="Heat shock protein 70kD (HSP70), peptide-binding domain"/>
    <property type="match status" value="1"/>
</dbReference>
<dbReference type="PROSITE" id="PS00297">
    <property type="entry name" value="HSP70_1"/>
    <property type="match status" value="1"/>
</dbReference>
<dbReference type="PROSITE" id="PS00329">
    <property type="entry name" value="HSP70_2"/>
    <property type="match status" value="1"/>
</dbReference>
<dbReference type="PROSITE" id="PS01036">
    <property type="entry name" value="HSP70_3"/>
    <property type="match status" value="1"/>
</dbReference>
<reference key="1">
    <citation type="journal article" date="2012" name="Environ. Microbiol.">
        <title>The genome sequence of Desulfatibacillum alkenivorans AK-01: a blueprint for anaerobic alkane oxidation.</title>
        <authorList>
            <person name="Callaghan A.V."/>
            <person name="Morris B.E."/>
            <person name="Pereira I.A."/>
            <person name="McInerney M.J."/>
            <person name="Austin R.N."/>
            <person name="Groves J.T."/>
            <person name="Kukor J.J."/>
            <person name="Suflita J.M."/>
            <person name="Young L.Y."/>
            <person name="Zylstra G.J."/>
            <person name="Wawrik B."/>
        </authorList>
    </citation>
    <scope>NUCLEOTIDE SEQUENCE [LARGE SCALE GENOMIC DNA]</scope>
    <source>
        <strain>AK-01</strain>
    </source>
</reference>